<sequence>MAVKRLIETFVPENYKIFLDIDRKTKKIKGQVAITGEAKDSVIAFHAKGLHFSKVRAFSVDTNFIENEEDEEIVVKIGETGRVTVSFEYEAELTDNMMGIYPSYYEVNGEKKMLIGTQFESHFARQAFPSIDEPEAKATFDLSVKFDEEEGDIIVSNMPELLNINGIHVFERTVKMSSYLLAFVFGELQFKKGKTKSGVEVGAFATKDHSEAALDFPLDIAIRSIEFYEDYYKTPYPLPHSWHIALPDFSAGAMENWGCITYREVCMLVDPENATIQSKQYVATVIAHELAHQWFGDLVTMQWWDDLWLNESFANNMEYVCMDALEPSWNVWESFSISEANMALNRDATDGVQSVHVEVTHPDEIGTLFDPAIVYAKGSRLMVMLRKWLGDEDFAAGLALYFKRHQYGNTVGDNLWDALAEVSGKDVAAFMHSWVNQPGYPVVTAEVIDDTLVLSQKQFFVGEGADKGRLWNVPLNTNWSGLPDLLSSEKVEIPGFAALKAKNDGKALFLNDANMAHYIIDYKGQLLTDLLSEVETLENVTKFQILQDRKLLAKAGVISYADVVNILPAFTNEESYLVNTGLSQLISELELFVDEDSETEKAFQSLVGKLFAKNYARLGWDKVAGESAGDESLRGIVLSKTLYAENADAKAKASQIFAAHKENLAGIPADIRPIVLNNEIKTTNSAELVKTYRETYVKTSLQEFKRELEGAVALIKDEKVIAELLESFKNADIVKPQDIAFSWFYLLRNDFSQDAAWAWEKANWAFLEEKLGGDMSYDKFVIYPGNTFKTADKLAEYKAFFEPKLENQGLKRSIEMAIKQITARVALIDSQKADVDKSIKEISEKL</sequence>
<feature type="chain" id="PRO_0000095073" description="Aminopeptidase N">
    <location>
        <begin position="1"/>
        <end position="846"/>
    </location>
</feature>
<feature type="active site" description="Proton acceptor" evidence="2">
    <location>
        <position position="289"/>
    </location>
</feature>
<feature type="binding site" evidence="1">
    <location>
        <position position="120"/>
    </location>
    <ligand>
        <name>substrate</name>
    </ligand>
</feature>
<feature type="binding site" evidence="1">
    <location>
        <begin position="252"/>
        <end position="256"/>
    </location>
    <ligand>
        <name>substrate</name>
    </ligand>
</feature>
<feature type="binding site" evidence="2">
    <location>
        <position position="288"/>
    </location>
    <ligand>
        <name>Zn(2+)</name>
        <dbReference type="ChEBI" id="CHEBI:29105"/>
        <note>catalytic</note>
    </ligand>
</feature>
<feature type="binding site" evidence="2">
    <location>
        <position position="292"/>
    </location>
    <ligand>
        <name>Zn(2+)</name>
        <dbReference type="ChEBI" id="CHEBI:29105"/>
        <note>catalytic</note>
    </ligand>
</feature>
<feature type="binding site" evidence="2">
    <location>
        <position position="311"/>
    </location>
    <ligand>
        <name>Zn(2+)</name>
        <dbReference type="ChEBI" id="CHEBI:29105"/>
        <note>catalytic</note>
    </ligand>
</feature>
<feature type="site" description="Transition state stabilizer" evidence="1">
    <location>
        <position position="375"/>
    </location>
</feature>
<dbReference type="EC" id="3.4.11.2"/>
<dbReference type="EMBL" id="AE005176">
    <property type="protein sequence ID" value="AAK04403.1"/>
    <property type="molecule type" value="Genomic_DNA"/>
</dbReference>
<dbReference type="PIR" id="A86663">
    <property type="entry name" value="A86663"/>
</dbReference>
<dbReference type="RefSeq" id="NP_266461.1">
    <property type="nucleotide sequence ID" value="NC_002662.1"/>
</dbReference>
<dbReference type="RefSeq" id="WP_003131692.1">
    <property type="nucleotide sequence ID" value="NC_002662.1"/>
</dbReference>
<dbReference type="SMR" id="Q9CIQ1"/>
<dbReference type="MEROPS" id="M01.002"/>
<dbReference type="PaxDb" id="272623-L102360"/>
<dbReference type="EnsemblBacteria" id="AAK04403">
    <property type="protein sequence ID" value="AAK04403"/>
    <property type="gene ID" value="L102360"/>
</dbReference>
<dbReference type="KEGG" id="lla:L102360"/>
<dbReference type="PATRIC" id="fig|272623.7.peg.335"/>
<dbReference type="eggNOG" id="COG0308">
    <property type="taxonomic scope" value="Bacteria"/>
</dbReference>
<dbReference type="HOGENOM" id="CLU_003705_0_1_9"/>
<dbReference type="OrthoDB" id="100605at2"/>
<dbReference type="Proteomes" id="UP000002196">
    <property type="component" value="Chromosome"/>
</dbReference>
<dbReference type="GO" id="GO:0005737">
    <property type="term" value="C:cytoplasm"/>
    <property type="evidence" value="ECO:0007669"/>
    <property type="project" value="UniProtKB-SubCell"/>
</dbReference>
<dbReference type="GO" id="GO:0005615">
    <property type="term" value="C:extracellular space"/>
    <property type="evidence" value="ECO:0007669"/>
    <property type="project" value="TreeGrafter"/>
</dbReference>
<dbReference type="GO" id="GO:0016020">
    <property type="term" value="C:membrane"/>
    <property type="evidence" value="ECO:0007669"/>
    <property type="project" value="TreeGrafter"/>
</dbReference>
<dbReference type="GO" id="GO:0016285">
    <property type="term" value="F:alanyl aminopeptidase activity"/>
    <property type="evidence" value="ECO:0007669"/>
    <property type="project" value="UniProtKB-EC"/>
</dbReference>
<dbReference type="GO" id="GO:0070006">
    <property type="term" value="F:metalloaminopeptidase activity"/>
    <property type="evidence" value="ECO:0007669"/>
    <property type="project" value="TreeGrafter"/>
</dbReference>
<dbReference type="GO" id="GO:0042277">
    <property type="term" value="F:peptide binding"/>
    <property type="evidence" value="ECO:0007669"/>
    <property type="project" value="TreeGrafter"/>
</dbReference>
<dbReference type="GO" id="GO:0008270">
    <property type="term" value="F:zinc ion binding"/>
    <property type="evidence" value="ECO:0007669"/>
    <property type="project" value="InterPro"/>
</dbReference>
<dbReference type="GO" id="GO:0043171">
    <property type="term" value="P:peptide catabolic process"/>
    <property type="evidence" value="ECO:0007669"/>
    <property type="project" value="TreeGrafter"/>
</dbReference>
<dbReference type="GO" id="GO:0006508">
    <property type="term" value="P:proteolysis"/>
    <property type="evidence" value="ECO:0007669"/>
    <property type="project" value="UniProtKB-KW"/>
</dbReference>
<dbReference type="CDD" id="cd09601">
    <property type="entry name" value="M1_APN-Q_like"/>
    <property type="match status" value="1"/>
</dbReference>
<dbReference type="FunFam" id="1.10.390.10:FF:000013">
    <property type="entry name" value="Aminopeptidase N"/>
    <property type="match status" value="1"/>
</dbReference>
<dbReference type="Gene3D" id="1.25.50.20">
    <property type="match status" value="1"/>
</dbReference>
<dbReference type="Gene3D" id="1.10.390.10">
    <property type="entry name" value="Neutral Protease Domain 2"/>
    <property type="match status" value="1"/>
</dbReference>
<dbReference type="Gene3D" id="2.60.40.1730">
    <property type="entry name" value="tricorn interacting facor f3 domain"/>
    <property type="match status" value="1"/>
</dbReference>
<dbReference type="InterPro" id="IPR045357">
    <property type="entry name" value="Aminopeptidase_N-like_N"/>
</dbReference>
<dbReference type="InterPro" id="IPR042097">
    <property type="entry name" value="Aminopeptidase_N-like_N_sf"/>
</dbReference>
<dbReference type="InterPro" id="IPR024571">
    <property type="entry name" value="ERAP1-like_C_dom"/>
</dbReference>
<dbReference type="InterPro" id="IPR034016">
    <property type="entry name" value="M1_APN-typ"/>
</dbReference>
<dbReference type="InterPro" id="IPR001930">
    <property type="entry name" value="Peptidase_M1"/>
</dbReference>
<dbReference type="InterPro" id="IPR050344">
    <property type="entry name" value="Peptidase_M1_aminopeptidases"/>
</dbReference>
<dbReference type="InterPro" id="IPR014782">
    <property type="entry name" value="Peptidase_M1_dom"/>
</dbReference>
<dbReference type="InterPro" id="IPR027268">
    <property type="entry name" value="Peptidase_M4/M1_CTD_sf"/>
</dbReference>
<dbReference type="PANTHER" id="PTHR11533">
    <property type="entry name" value="PROTEASE M1 ZINC METALLOPROTEASE"/>
    <property type="match status" value="1"/>
</dbReference>
<dbReference type="PANTHER" id="PTHR11533:SF174">
    <property type="entry name" value="PUROMYCIN-SENSITIVE AMINOPEPTIDASE-RELATED"/>
    <property type="match status" value="1"/>
</dbReference>
<dbReference type="Pfam" id="PF11838">
    <property type="entry name" value="ERAP1_C"/>
    <property type="match status" value="1"/>
</dbReference>
<dbReference type="Pfam" id="PF01433">
    <property type="entry name" value="Peptidase_M1"/>
    <property type="match status" value="1"/>
</dbReference>
<dbReference type="Pfam" id="PF17900">
    <property type="entry name" value="Peptidase_M1_N"/>
    <property type="match status" value="1"/>
</dbReference>
<dbReference type="PRINTS" id="PR00756">
    <property type="entry name" value="ALADIPTASE"/>
</dbReference>
<dbReference type="SUPFAM" id="SSF63737">
    <property type="entry name" value="Leukotriene A4 hydrolase N-terminal domain"/>
    <property type="match status" value="1"/>
</dbReference>
<dbReference type="SUPFAM" id="SSF55486">
    <property type="entry name" value="Metalloproteases ('zincins'), catalytic domain"/>
    <property type="match status" value="1"/>
</dbReference>
<dbReference type="PROSITE" id="PS00142">
    <property type="entry name" value="ZINC_PROTEASE"/>
    <property type="match status" value="1"/>
</dbReference>
<proteinExistence type="inferred from homology"/>
<name>AMPN_LACLA</name>
<gene>
    <name type="primary">pepN</name>
    <name type="ordered locus">LL0305</name>
    <name type="ORF">L102360</name>
</gene>
<organism>
    <name type="scientific">Lactococcus lactis subsp. lactis (strain IL1403)</name>
    <name type="common">Streptococcus lactis</name>
    <dbReference type="NCBI Taxonomy" id="272623"/>
    <lineage>
        <taxon>Bacteria</taxon>
        <taxon>Bacillati</taxon>
        <taxon>Bacillota</taxon>
        <taxon>Bacilli</taxon>
        <taxon>Lactobacillales</taxon>
        <taxon>Streptococcaceae</taxon>
        <taxon>Lactococcus</taxon>
    </lineage>
</organism>
<evidence type="ECO:0000250" key="1"/>
<evidence type="ECO:0000255" key="2">
    <source>
        <dbReference type="PROSITE-ProRule" id="PRU10095"/>
    </source>
</evidence>
<evidence type="ECO:0000305" key="3"/>
<reference key="1">
    <citation type="journal article" date="2001" name="Genome Res.">
        <title>The complete genome sequence of the lactic acid bacterium Lactococcus lactis ssp. lactis IL1403.</title>
        <authorList>
            <person name="Bolotin A."/>
            <person name="Wincker P."/>
            <person name="Mauger S."/>
            <person name="Jaillon O."/>
            <person name="Malarme K."/>
            <person name="Weissenbach J."/>
            <person name="Ehrlich S.D."/>
            <person name="Sorokin A."/>
        </authorList>
    </citation>
    <scope>NUCLEOTIDE SEQUENCE [LARGE SCALE GENOMIC DNA]</scope>
    <source>
        <strain>IL1403</strain>
    </source>
</reference>
<comment type="function">
    <text evidence="1">Aminopeptidase with broad substrate specificity to several peptides. It has more affinity for oligopeptides than for dipeptides. It plays an essential role in the metabolism, it may be involved in nitrogen supply or protein turnover (By similarity).</text>
</comment>
<comment type="catalytic activity">
    <reaction>
        <text>Release of an N-terminal amino acid, Xaa-|-Yaa- from a peptide, amide or arylamide. Xaa is preferably Ala, but may be most amino acids including Pro (slow action). When a terminal hydrophobic residue is followed by a prolyl residue, the two may be released as an intact Xaa-Pro dipeptide.</text>
        <dbReference type="EC" id="3.4.11.2"/>
    </reaction>
</comment>
<comment type="cofactor">
    <cofactor evidence="1">
        <name>Zn(2+)</name>
        <dbReference type="ChEBI" id="CHEBI:29105"/>
    </cofactor>
    <text evidence="1">Binds 1 zinc ion per subunit.</text>
</comment>
<comment type="subunit">
    <text evidence="1">Monomer.</text>
</comment>
<comment type="subcellular location">
    <subcellularLocation>
        <location evidence="1">Cytoplasm</location>
    </subcellularLocation>
    <text evidence="1">It may be secreted through an unknown mechanism.</text>
</comment>
<comment type="similarity">
    <text evidence="3">Belongs to the peptidase M1 family.</text>
</comment>
<protein>
    <recommendedName>
        <fullName>Aminopeptidase N</fullName>
        <ecNumber>3.4.11.2</ecNumber>
    </recommendedName>
    <alternativeName>
        <fullName>Alanine aminopeptidase</fullName>
    </alternativeName>
    <alternativeName>
        <fullName>Lysyl aminopeptidase</fullName>
        <shortName>Lys-AP</shortName>
    </alternativeName>
</protein>
<keyword id="KW-0031">Aminopeptidase</keyword>
<keyword id="KW-0963">Cytoplasm</keyword>
<keyword id="KW-0378">Hydrolase</keyword>
<keyword id="KW-0479">Metal-binding</keyword>
<keyword id="KW-0482">Metalloprotease</keyword>
<keyword id="KW-0645">Protease</keyword>
<keyword id="KW-1185">Reference proteome</keyword>
<keyword id="KW-0862">Zinc</keyword>
<accession>Q9CIQ1</accession>